<accession>Q6FJ26</accession>
<comment type="subcellular location">
    <subcellularLocation>
        <location evidence="1">Lipid droplet</location>
    </subcellularLocation>
    <subcellularLocation>
        <location evidence="1">Mitochondrion</location>
    </subcellularLocation>
</comment>
<comment type="similarity">
    <text evidence="2">Belongs to the YIM1 family.</text>
</comment>
<protein>
    <recommendedName>
        <fullName>Protein YIM1</fullName>
    </recommendedName>
</protein>
<dbReference type="EMBL" id="CR380959">
    <property type="protein sequence ID" value="CAG62746.1"/>
    <property type="molecule type" value="Genomic_DNA"/>
</dbReference>
<dbReference type="RefSeq" id="XP_449768.1">
    <property type="nucleotide sequence ID" value="XM_449768.1"/>
</dbReference>
<dbReference type="SMR" id="Q6FJ26"/>
<dbReference type="FunCoup" id="Q6FJ26">
    <property type="interactions" value="164"/>
</dbReference>
<dbReference type="STRING" id="284593.Q6FJ26"/>
<dbReference type="EnsemblFungi" id="CAGL0M09713g-T">
    <property type="protein sequence ID" value="CAGL0M09713g-T-p1"/>
    <property type="gene ID" value="CAGL0M09713g"/>
</dbReference>
<dbReference type="KEGG" id="cgr:2891332"/>
<dbReference type="CGD" id="CAL0137015">
    <property type="gene designation" value="CAGL0M09713g"/>
</dbReference>
<dbReference type="VEuPathDB" id="FungiDB:B1J91_M09713g"/>
<dbReference type="VEuPathDB" id="FungiDB:CAGL0M09713g"/>
<dbReference type="eggNOG" id="KOG1198">
    <property type="taxonomic scope" value="Eukaryota"/>
</dbReference>
<dbReference type="HOGENOM" id="CLU_026673_3_3_1"/>
<dbReference type="InParanoid" id="Q6FJ26"/>
<dbReference type="OMA" id="GPLTYFT"/>
<dbReference type="Proteomes" id="UP000002428">
    <property type="component" value="Chromosome M"/>
</dbReference>
<dbReference type="GO" id="GO:0005811">
    <property type="term" value="C:lipid droplet"/>
    <property type="evidence" value="ECO:0007669"/>
    <property type="project" value="UniProtKB-SubCell"/>
</dbReference>
<dbReference type="GO" id="GO:0005739">
    <property type="term" value="C:mitochondrion"/>
    <property type="evidence" value="ECO:0007669"/>
    <property type="project" value="UniProtKB-SubCell"/>
</dbReference>
<dbReference type="GO" id="GO:0018455">
    <property type="term" value="F:alcohol dehydrogenase [NAD(P)+] activity"/>
    <property type="evidence" value="ECO:0007669"/>
    <property type="project" value="EnsemblFungi"/>
</dbReference>
<dbReference type="GO" id="GO:0006974">
    <property type="term" value="P:DNA damage response"/>
    <property type="evidence" value="ECO:0007669"/>
    <property type="project" value="EnsemblFungi"/>
</dbReference>
<dbReference type="CDD" id="cd08247">
    <property type="entry name" value="AST1_like"/>
    <property type="match status" value="1"/>
</dbReference>
<dbReference type="Gene3D" id="3.90.180.10">
    <property type="entry name" value="Medium-chain alcohol dehydrogenases, catalytic domain"/>
    <property type="match status" value="1"/>
</dbReference>
<dbReference type="Gene3D" id="3.40.50.720">
    <property type="entry name" value="NAD(P)-binding Rossmann-like Domain"/>
    <property type="match status" value="1"/>
</dbReference>
<dbReference type="InterPro" id="IPR013154">
    <property type="entry name" value="ADH-like_N"/>
</dbReference>
<dbReference type="InterPro" id="IPR011032">
    <property type="entry name" value="GroES-like_sf"/>
</dbReference>
<dbReference type="InterPro" id="IPR036291">
    <property type="entry name" value="NAD(P)-bd_dom_sf"/>
</dbReference>
<dbReference type="InterPro" id="IPR020843">
    <property type="entry name" value="PKS_ER"/>
</dbReference>
<dbReference type="InterPro" id="IPR050700">
    <property type="entry name" value="YIM1/Zinc_Alcohol_DH_Fams"/>
</dbReference>
<dbReference type="PANTHER" id="PTHR11695">
    <property type="entry name" value="ALCOHOL DEHYDROGENASE RELATED"/>
    <property type="match status" value="1"/>
</dbReference>
<dbReference type="PANTHER" id="PTHR11695:SF294">
    <property type="entry name" value="RETICULON-4-INTERACTING PROTEIN 1, MITOCHONDRIAL"/>
    <property type="match status" value="1"/>
</dbReference>
<dbReference type="Pfam" id="PF08240">
    <property type="entry name" value="ADH_N"/>
    <property type="match status" value="1"/>
</dbReference>
<dbReference type="Pfam" id="PF13602">
    <property type="entry name" value="ADH_zinc_N_2"/>
    <property type="match status" value="1"/>
</dbReference>
<dbReference type="SMART" id="SM00829">
    <property type="entry name" value="PKS_ER"/>
    <property type="match status" value="1"/>
</dbReference>
<dbReference type="SUPFAM" id="SSF50129">
    <property type="entry name" value="GroES-like"/>
    <property type="match status" value="1"/>
</dbReference>
<dbReference type="SUPFAM" id="SSF51735">
    <property type="entry name" value="NAD(P)-binding Rossmann-fold domains"/>
    <property type="match status" value="1"/>
</dbReference>
<organism>
    <name type="scientific">Candida glabrata (strain ATCC 2001 / BCRC 20586 / JCM 3761 / NBRC 0622 / NRRL Y-65 / CBS 138)</name>
    <name type="common">Yeast</name>
    <name type="synonym">Nakaseomyces glabratus</name>
    <dbReference type="NCBI Taxonomy" id="284593"/>
    <lineage>
        <taxon>Eukaryota</taxon>
        <taxon>Fungi</taxon>
        <taxon>Dikarya</taxon>
        <taxon>Ascomycota</taxon>
        <taxon>Saccharomycotina</taxon>
        <taxon>Saccharomycetes</taxon>
        <taxon>Saccharomycetales</taxon>
        <taxon>Saccharomycetaceae</taxon>
        <taxon>Nakaseomyces</taxon>
    </lineage>
</organism>
<feature type="chain" id="PRO_0000409675" description="Protein YIM1">
    <location>
        <begin position="1"/>
        <end position="368"/>
    </location>
</feature>
<keyword id="KW-0551">Lipid droplet</keyword>
<keyword id="KW-0496">Mitochondrion</keyword>
<keyword id="KW-1185">Reference proteome</keyword>
<proteinExistence type="inferred from homology"/>
<name>YIM1_CANGA</name>
<evidence type="ECO:0000250" key="1"/>
<evidence type="ECO:0000305" key="2"/>
<reference key="1">
    <citation type="journal article" date="2004" name="Nature">
        <title>Genome evolution in yeasts.</title>
        <authorList>
            <person name="Dujon B."/>
            <person name="Sherman D."/>
            <person name="Fischer G."/>
            <person name="Durrens P."/>
            <person name="Casaregola S."/>
            <person name="Lafontaine I."/>
            <person name="de Montigny J."/>
            <person name="Marck C."/>
            <person name="Neuveglise C."/>
            <person name="Talla E."/>
            <person name="Goffard N."/>
            <person name="Frangeul L."/>
            <person name="Aigle M."/>
            <person name="Anthouard V."/>
            <person name="Babour A."/>
            <person name="Barbe V."/>
            <person name="Barnay S."/>
            <person name="Blanchin S."/>
            <person name="Beckerich J.-M."/>
            <person name="Beyne E."/>
            <person name="Bleykasten C."/>
            <person name="Boisrame A."/>
            <person name="Boyer J."/>
            <person name="Cattolico L."/>
            <person name="Confanioleri F."/>
            <person name="de Daruvar A."/>
            <person name="Despons L."/>
            <person name="Fabre E."/>
            <person name="Fairhead C."/>
            <person name="Ferry-Dumazet H."/>
            <person name="Groppi A."/>
            <person name="Hantraye F."/>
            <person name="Hennequin C."/>
            <person name="Jauniaux N."/>
            <person name="Joyet P."/>
            <person name="Kachouri R."/>
            <person name="Kerrest A."/>
            <person name="Koszul R."/>
            <person name="Lemaire M."/>
            <person name="Lesur I."/>
            <person name="Ma L."/>
            <person name="Muller H."/>
            <person name="Nicaud J.-M."/>
            <person name="Nikolski M."/>
            <person name="Oztas S."/>
            <person name="Ozier-Kalogeropoulos O."/>
            <person name="Pellenz S."/>
            <person name="Potier S."/>
            <person name="Richard G.-F."/>
            <person name="Straub M.-L."/>
            <person name="Suleau A."/>
            <person name="Swennen D."/>
            <person name="Tekaia F."/>
            <person name="Wesolowski-Louvel M."/>
            <person name="Westhof E."/>
            <person name="Wirth B."/>
            <person name="Zeniou-Meyer M."/>
            <person name="Zivanovic Y."/>
            <person name="Bolotin-Fukuhara M."/>
            <person name="Thierry A."/>
            <person name="Bouchier C."/>
            <person name="Caudron B."/>
            <person name="Scarpelli C."/>
            <person name="Gaillardin C."/>
            <person name="Weissenbach J."/>
            <person name="Wincker P."/>
            <person name="Souciet J.-L."/>
        </authorList>
    </citation>
    <scope>NUCLEOTIDE SEQUENCE [LARGE SCALE GENOMIC DNA]</scope>
    <source>
        <strain>ATCC 2001 / BCRC 20586 / JCM 3761 / NBRC 0622 / NRRL Y-65 / CBS 138</strain>
    </source>
</reference>
<gene>
    <name type="primary">YIM1</name>
    <name type="ordered locus">CAGL0M09713g</name>
</gene>
<sequence length="368" mass="41849">MVQQRSITFVDGYSKPAITTTELDLDNCFKDDEIVIKVKCCAINPIDMVVYGLSTTWLTGCKPKTFGRDFSGVIVRAGSRVDPQWKVDDEVNGQYVHLLGDRGSFSDYLIFNPAKNKSIAHMQKFPRGEGALNYNEGKYDDWVLNASFPLVYGTADSVLADYIKKWTPESRILVIGASTQVSNCLIQIAKRHYNIGTVVGICNKNSFEYNEKFGWDHLVSYNDGKTIENVTKLMEEKLGGEKFDMIFDSVGNTDFFPVIDKFLKPKSTGSYFLTVVGDNKLDYKNPTFRRAMPLSVAWKKINPFLGFNYSTVLVKPIDRYMKLSTEMIQKNQFEPVIDSVYEFDQYQEAMDKLLTNKAKGKIVIRVNK</sequence>